<organism>
    <name type="scientific">Methanococcus aeolicus (strain ATCC BAA-1280 / DSM 17508 / OCM 812 / Nankai-3)</name>
    <dbReference type="NCBI Taxonomy" id="419665"/>
    <lineage>
        <taxon>Archaea</taxon>
        <taxon>Methanobacteriati</taxon>
        <taxon>Methanobacteriota</taxon>
        <taxon>Methanomada group</taxon>
        <taxon>Methanococci</taxon>
        <taxon>Methanococcales</taxon>
        <taxon>Methanococcaceae</taxon>
        <taxon>Methanococcus</taxon>
    </lineage>
</organism>
<comment type="function">
    <text evidence="1">Part of a complex that catalyzes the formation of methyl-coenzyme M and tetrahydromethanopterin from coenzyme M and methyl-tetrahydromethanopterin. This is an energy-conserving, sodium-ion translocating step. MtrH catalyzes the transfer of the methyl group from methyl-tetrahydromethanopterin to the corrinoid prosthetic group of MtrA.</text>
</comment>
<comment type="catalytic activity">
    <reaction evidence="1">
        <text>5-methyl-5,6,7,8-tetrahydromethanopterin + coenzyme M + 2 Na(+)(in) = 5,6,7,8-tetrahydromethanopterin + methyl-coenzyme M + 2 Na(+)(out)</text>
        <dbReference type="Rhea" id="RHEA:53492"/>
        <dbReference type="ChEBI" id="CHEBI:29101"/>
        <dbReference type="ChEBI" id="CHEBI:58103"/>
        <dbReference type="ChEBI" id="CHEBI:58116"/>
        <dbReference type="ChEBI" id="CHEBI:58286"/>
        <dbReference type="ChEBI" id="CHEBI:58319"/>
        <dbReference type="EC" id="7.2.1.4"/>
    </reaction>
</comment>
<comment type="pathway">
    <text evidence="1">One-carbon metabolism; methanogenesis from CO(2); methyl-coenzyme M from 5,10-methylene-5,6,7,8-tetrahydromethanopterin: step 2/2.</text>
</comment>
<comment type="subunit">
    <text evidence="1">The complex is composed of 8 subunits; MtrA, MtrB, MtrC, MtrD, MtrE, MtrF, MtrG and MtrH.</text>
</comment>
<comment type="similarity">
    <text evidence="1">Belongs to the MtrH family.</text>
</comment>
<keyword id="KW-0484">Methanogenesis</keyword>
<keyword id="KW-0489">Methyltransferase</keyword>
<keyword id="KW-0554">One-carbon metabolism</keyword>
<keyword id="KW-0808">Transferase</keyword>
<keyword id="KW-1278">Translocase</keyword>
<dbReference type="EC" id="7.2.1.4" evidence="1"/>
<dbReference type="EMBL" id="CP000743">
    <property type="protein sequence ID" value="ABR56852.1"/>
    <property type="molecule type" value="Genomic_DNA"/>
</dbReference>
<dbReference type="RefSeq" id="WP_011973984.1">
    <property type="nucleotide sequence ID" value="NC_009635.1"/>
</dbReference>
<dbReference type="SMR" id="A6UWI0"/>
<dbReference type="STRING" id="419665.Maeo_1276"/>
<dbReference type="GeneID" id="5326934"/>
<dbReference type="GeneID" id="75304740"/>
<dbReference type="KEGG" id="mae:Maeo_1276"/>
<dbReference type="eggNOG" id="arCOG04336">
    <property type="taxonomic scope" value="Archaea"/>
</dbReference>
<dbReference type="HOGENOM" id="CLU_048697_0_0_2"/>
<dbReference type="OrthoDB" id="18811at2157"/>
<dbReference type="UniPathway" id="UPA00640">
    <property type="reaction ID" value="UER00698"/>
</dbReference>
<dbReference type="Proteomes" id="UP000001106">
    <property type="component" value="Chromosome"/>
</dbReference>
<dbReference type="GO" id="GO:0030269">
    <property type="term" value="F:tetrahydromethanopterin S-methyltransferase activity"/>
    <property type="evidence" value="ECO:0007669"/>
    <property type="project" value="UniProtKB-UniRule"/>
</dbReference>
<dbReference type="GO" id="GO:0019386">
    <property type="term" value="P:methanogenesis, from carbon dioxide"/>
    <property type="evidence" value="ECO:0007669"/>
    <property type="project" value="UniProtKB-UniRule"/>
</dbReference>
<dbReference type="GO" id="GO:0032259">
    <property type="term" value="P:methylation"/>
    <property type="evidence" value="ECO:0007669"/>
    <property type="project" value="UniProtKB-KW"/>
</dbReference>
<dbReference type="GO" id="GO:0006730">
    <property type="term" value="P:one-carbon metabolic process"/>
    <property type="evidence" value="ECO:0007669"/>
    <property type="project" value="UniProtKB-UniRule"/>
</dbReference>
<dbReference type="Gene3D" id="3.20.20.20">
    <property type="entry name" value="Dihydropteroate synthase-like"/>
    <property type="match status" value="1"/>
</dbReference>
<dbReference type="HAMAP" id="MF_01501">
    <property type="entry name" value="MtrH"/>
    <property type="match status" value="1"/>
</dbReference>
<dbReference type="InterPro" id="IPR011005">
    <property type="entry name" value="Dihydropteroate_synth-like_sf"/>
</dbReference>
<dbReference type="InterPro" id="IPR023467">
    <property type="entry name" value="MeTrfase_MtrH/MtxH"/>
</dbReference>
<dbReference type="InterPro" id="IPR028342">
    <property type="entry name" value="MtrH"/>
</dbReference>
<dbReference type="NCBIfam" id="TIGR01114">
    <property type="entry name" value="mtrH"/>
    <property type="match status" value="1"/>
</dbReference>
<dbReference type="Pfam" id="PF02007">
    <property type="entry name" value="MtrH"/>
    <property type="match status" value="1"/>
</dbReference>
<dbReference type="PIRSF" id="PIRSF500206">
    <property type="entry name" value="MtrH"/>
    <property type="match status" value="1"/>
</dbReference>
<dbReference type="PIRSF" id="PIRSF004960">
    <property type="entry name" value="MtrH_MtxH"/>
    <property type="match status" value="1"/>
</dbReference>
<dbReference type="SUPFAM" id="SSF51717">
    <property type="entry name" value="Dihydropteroate synthetase-like"/>
    <property type="match status" value="1"/>
</dbReference>
<gene>
    <name evidence="1" type="primary">mtrH</name>
    <name type="ordered locus">Maeo_1276</name>
</gene>
<evidence type="ECO:0000255" key="1">
    <source>
        <dbReference type="HAMAP-Rule" id="MF_01501"/>
    </source>
</evidence>
<proteinExistence type="inferred from homology"/>
<protein>
    <recommendedName>
        <fullName evidence="1">Tetrahydromethanopterin S-methyltransferase subunit H</fullName>
        <ecNumber evidence="1">7.2.1.4</ecNumber>
    </recommendedName>
    <alternativeName>
        <fullName evidence="1">N5-methyltetrahydromethanopterin--coenzyme M methyltransferase subunit H</fullName>
    </alternativeName>
</protein>
<feature type="chain" id="PRO_1000024471" description="Tetrahydromethanopterin S-methyltransferase subunit H">
    <location>
        <begin position="1"/>
        <end position="319"/>
    </location>
</feature>
<sequence length="319" mass="34179">MFKFDKEQMVIEIAGRKFGGQPGEYPTGLSGTIFYARHKIVEDEIKGIFDKSAAEALINKQAEMEDTTGNPALVQVFGGNPEALTKYIDFVAEVWDGPMLLDSTSGEARMAAATRATEAGYANQCIYNSINVSIDEAEFQNLVESDIEASIVLCFDPMDPSVEGKLNVLLDGGKTTDTGMLDLAEKAGIKYPLIDVACTPLGSGAGQSVRASFAVKAKLGLPVGSGIHNIPSAWDWLRDFRKGLREAGQTQLAKDVHHVCDIGANIVQTMGSGDFVLYGPIDNAELAFPAVAMTDMVIAETAKDMGTVPVDTHPINKLL</sequence>
<accession>A6UWI0</accession>
<reference key="1">
    <citation type="submission" date="2007-06" db="EMBL/GenBank/DDBJ databases">
        <title>Complete sequence of Methanococcus aeolicus Nankai-3.</title>
        <authorList>
            <consortium name="US DOE Joint Genome Institute"/>
            <person name="Copeland A."/>
            <person name="Lucas S."/>
            <person name="Lapidus A."/>
            <person name="Barry K."/>
            <person name="Glavina del Rio T."/>
            <person name="Dalin E."/>
            <person name="Tice H."/>
            <person name="Pitluck S."/>
            <person name="Chain P."/>
            <person name="Malfatti S."/>
            <person name="Shin M."/>
            <person name="Vergez L."/>
            <person name="Schmutz J."/>
            <person name="Larimer F."/>
            <person name="Land M."/>
            <person name="Hauser L."/>
            <person name="Kyrpides N."/>
            <person name="Lykidis A."/>
            <person name="Sieprawska-Lupa M."/>
            <person name="Whitman W.B."/>
            <person name="Richardson P."/>
        </authorList>
    </citation>
    <scope>NUCLEOTIDE SEQUENCE [LARGE SCALE GENOMIC DNA]</scope>
    <source>
        <strain>ATCC BAA-1280 / DSM 17508 / OCM 812 / Nankai-3</strain>
    </source>
</reference>
<name>MTRH_META3</name>